<dbReference type="EC" id="1.2.1.71" evidence="1"/>
<dbReference type="EMBL" id="CP000155">
    <property type="protein sequence ID" value="ABC28783.1"/>
    <property type="molecule type" value="Genomic_DNA"/>
</dbReference>
<dbReference type="RefSeq" id="WP_011395854.1">
    <property type="nucleotide sequence ID" value="NC_007645.1"/>
</dbReference>
<dbReference type="SMR" id="Q2SKP1"/>
<dbReference type="STRING" id="349521.HCH_01950"/>
<dbReference type="KEGG" id="hch:HCH_01950"/>
<dbReference type="eggNOG" id="COG1012">
    <property type="taxonomic scope" value="Bacteria"/>
</dbReference>
<dbReference type="HOGENOM" id="CLU_005391_1_0_6"/>
<dbReference type="OrthoDB" id="9812625at2"/>
<dbReference type="UniPathway" id="UPA00185">
    <property type="reaction ID" value="UER00282"/>
</dbReference>
<dbReference type="Proteomes" id="UP000000238">
    <property type="component" value="Chromosome"/>
</dbReference>
<dbReference type="GO" id="GO:0043824">
    <property type="term" value="F:succinylglutamate-semialdehyde dehydrogenase activity"/>
    <property type="evidence" value="ECO:0007669"/>
    <property type="project" value="UniProtKB-EC"/>
</dbReference>
<dbReference type="GO" id="GO:0019544">
    <property type="term" value="P:arginine catabolic process to glutamate"/>
    <property type="evidence" value="ECO:0007669"/>
    <property type="project" value="UniProtKB-UniRule"/>
</dbReference>
<dbReference type="GO" id="GO:0019545">
    <property type="term" value="P:arginine catabolic process to succinate"/>
    <property type="evidence" value="ECO:0007669"/>
    <property type="project" value="UniProtKB-UniRule"/>
</dbReference>
<dbReference type="CDD" id="cd07095">
    <property type="entry name" value="ALDH_SGSD_AstD"/>
    <property type="match status" value="1"/>
</dbReference>
<dbReference type="FunFam" id="3.40.605.10:FF:000010">
    <property type="entry name" value="N-succinylglutamate 5-semialdehyde dehydrogenase"/>
    <property type="match status" value="1"/>
</dbReference>
<dbReference type="Gene3D" id="3.40.605.10">
    <property type="entry name" value="Aldehyde Dehydrogenase, Chain A, domain 1"/>
    <property type="match status" value="1"/>
</dbReference>
<dbReference type="Gene3D" id="3.40.309.10">
    <property type="entry name" value="Aldehyde Dehydrogenase, Chain A, domain 2"/>
    <property type="match status" value="1"/>
</dbReference>
<dbReference type="HAMAP" id="MF_01174">
    <property type="entry name" value="Aldedh_AstD"/>
    <property type="match status" value="1"/>
</dbReference>
<dbReference type="InterPro" id="IPR016161">
    <property type="entry name" value="Ald_DH/histidinol_DH"/>
</dbReference>
<dbReference type="InterPro" id="IPR016163">
    <property type="entry name" value="Ald_DH_C"/>
</dbReference>
<dbReference type="InterPro" id="IPR016160">
    <property type="entry name" value="Ald_DH_CS_CYS"/>
</dbReference>
<dbReference type="InterPro" id="IPR029510">
    <property type="entry name" value="Ald_DH_CS_GLU"/>
</dbReference>
<dbReference type="InterPro" id="IPR016162">
    <property type="entry name" value="Ald_DH_N"/>
</dbReference>
<dbReference type="InterPro" id="IPR015590">
    <property type="entry name" value="Aldehyde_DH_dom"/>
</dbReference>
<dbReference type="InterPro" id="IPR017649">
    <property type="entry name" value="SuccinylGlu_semiald_DH_AstD"/>
</dbReference>
<dbReference type="NCBIfam" id="TIGR03240">
    <property type="entry name" value="arg_catab_astD"/>
    <property type="match status" value="1"/>
</dbReference>
<dbReference type="NCBIfam" id="NF006992">
    <property type="entry name" value="PRK09457.1"/>
    <property type="match status" value="1"/>
</dbReference>
<dbReference type="PANTHER" id="PTHR11699">
    <property type="entry name" value="ALDEHYDE DEHYDROGENASE-RELATED"/>
    <property type="match status" value="1"/>
</dbReference>
<dbReference type="Pfam" id="PF00171">
    <property type="entry name" value="Aldedh"/>
    <property type="match status" value="1"/>
</dbReference>
<dbReference type="SUPFAM" id="SSF53720">
    <property type="entry name" value="ALDH-like"/>
    <property type="match status" value="1"/>
</dbReference>
<dbReference type="PROSITE" id="PS00070">
    <property type="entry name" value="ALDEHYDE_DEHYDR_CYS"/>
    <property type="match status" value="1"/>
</dbReference>
<dbReference type="PROSITE" id="PS00687">
    <property type="entry name" value="ALDEHYDE_DEHYDR_GLU"/>
    <property type="match status" value="1"/>
</dbReference>
<keyword id="KW-0056">Arginine metabolism</keyword>
<keyword id="KW-0520">NAD</keyword>
<keyword id="KW-0560">Oxidoreductase</keyword>
<keyword id="KW-1185">Reference proteome</keyword>
<evidence type="ECO:0000255" key="1">
    <source>
        <dbReference type="HAMAP-Rule" id="MF_01174"/>
    </source>
</evidence>
<organism>
    <name type="scientific">Hahella chejuensis (strain KCTC 2396)</name>
    <dbReference type="NCBI Taxonomy" id="349521"/>
    <lineage>
        <taxon>Bacteria</taxon>
        <taxon>Pseudomonadati</taxon>
        <taxon>Pseudomonadota</taxon>
        <taxon>Gammaproteobacteria</taxon>
        <taxon>Oceanospirillales</taxon>
        <taxon>Hahellaceae</taxon>
        <taxon>Hahella</taxon>
    </lineage>
</organism>
<protein>
    <recommendedName>
        <fullName evidence="1">N-succinylglutamate 5-semialdehyde dehydrogenase</fullName>
        <ecNumber evidence="1">1.2.1.71</ecNumber>
    </recommendedName>
    <alternativeName>
        <fullName evidence="1">Succinylglutamic semialdehyde dehydrogenase</fullName>
        <shortName evidence="1">SGSD</shortName>
    </alternativeName>
</protein>
<name>ASTD_HAHCH</name>
<feature type="chain" id="PRO_0000262403" description="N-succinylglutamate 5-semialdehyde dehydrogenase">
    <location>
        <begin position="1"/>
        <end position="490"/>
    </location>
</feature>
<feature type="active site" evidence="1">
    <location>
        <position position="247"/>
    </location>
</feature>
<feature type="active site" evidence="1">
    <location>
        <position position="281"/>
    </location>
</feature>
<feature type="binding site" evidence="1">
    <location>
        <begin position="224"/>
        <end position="229"/>
    </location>
    <ligand>
        <name>NAD(+)</name>
        <dbReference type="ChEBI" id="CHEBI:57540"/>
    </ligand>
</feature>
<reference key="1">
    <citation type="journal article" date="2005" name="Nucleic Acids Res.">
        <title>Genomic blueprint of Hahella chejuensis, a marine microbe producing an algicidal agent.</title>
        <authorList>
            <person name="Jeong H."/>
            <person name="Yim J.H."/>
            <person name="Lee C."/>
            <person name="Choi S.-H."/>
            <person name="Park Y.K."/>
            <person name="Yoon S.H."/>
            <person name="Hur C.-G."/>
            <person name="Kang H.-Y."/>
            <person name="Kim D."/>
            <person name="Lee H.H."/>
            <person name="Park K.H."/>
            <person name="Park S.-H."/>
            <person name="Park H.-S."/>
            <person name="Lee H.K."/>
            <person name="Oh T.K."/>
            <person name="Kim J.F."/>
        </authorList>
    </citation>
    <scope>NUCLEOTIDE SEQUENCE [LARGE SCALE GENOMIC DNA]</scope>
    <source>
        <strain>KCTC 2396</strain>
    </source>
</reference>
<accession>Q2SKP1</accession>
<sequence length="490" mass="52550">MTVRESAFVNGRWLAGGGVEFESLDPVTQDCLWKGAAASDDVVGQAVQAARQAFTSWGRLDVSRRIDIVKRFAELLEEDKERLADVIGKETSKPLWEARTEVASMVAKVGISIQAFNERTGVSEQDVAAGHAVLKHRPHGVLAVFGPYNFPGHLPNGHIVPALIAGNTIVFKPSELTPWFAEETVRIWAKAGLPDGVLNLVQGARETGVALAANDGIDGLLFTGSSPTGHSLHRQFGGRPEKILALEMGGNNPLIIAPPYDLKGAVHHTLFSAFVSAGQRCTCARRLLVPDTAEGQAFLDELIAAAANLQVGRYDADPQPFMGGVISLRARDQMLAAQNKLAAEGGRILLEMRSLEENASLLSPGVIDVTDVQELPDEEHFGPMLQVLRYRDFDHALELANKTGFGLAAGLISDSRDLYDRFWLEVRAGIVNWNKPLTGASSAAPFGGVGASGNHRPSAYYAADYCAYPVATLEADQAQAPAQLSPGMSL</sequence>
<comment type="function">
    <text evidence="1">Catalyzes the NAD-dependent reduction of succinylglutamate semialdehyde into succinylglutamate.</text>
</comment>
<comment type="catalytic activity">
    <reaction evidence="1">
        <text>N-succinyl-L-glutamate 5-semialdehyde + NAD(+) + H2O = N-succinyl-L-glutamate + NADH + 2 H(+)</text>
        <dbReference type="Rhea" id="RHEA:10812"/>
        <dbReference type="ChEBI" id="CHEBI:15377"/>
        <dbReference type="ChEBI" id="CHEBI:15378"/>
        <dbReference type="ChEBI" id="CHEBI:57540"/>
        <dbReference type="ChEBI" id="CHEBI:57945"/>
        <dbReference type="ChEBI" id="CHEBI:58520"/>
        <dbReference type="ChEBI" id="CHEBI:58763"/>
        <dbReference type="EC" id="1.2.1.71"/>
    </reaction>
</comment>
<comment type="pathway">
    <text evidence="1">Amino-acid degradation; L-arginine degradation via AST pathway; L-glutamate and succinate from L-arginine: step 4/5.</text>
</comment>
<comment type="similarity">
    <text evidence="1">Belongs to the aldehyde dehydrogenase family. AstD subfamily.</text>
</comment>
<gene>
    <name evidence="1" type="primary">astD</name>
    <name type="ordered locus">HCH_01950</name>
</gene>
<proteinExistence type="inferred from homology"/>